<sequence>MKLGIKKVKMHVKKNDMVKVISGNDKGVSGKILRVFPEKNRVIVEGVNMRKRHMRPTQEYPQGAILEREMPIHASNVKKVS</sequence>
<gene>
    <name evidence="1" type="primary">rplX</name>
    <name type="ordered locus">Ctha_1099</name>
</gene>
<organism>
    <name type="scientific">Chloroherpeton thalassium (strain ATCC 35110 / GB-78)</name>
    <dbReference type="NCBI Taxonomy" id="517418"/>
    <lineage>
        <taxon>Bacteria</taxon>
        <taxon>Pseudomonadati</taxon>
        <taxon>Chlorobiota</taxon>
        <taxon>Chlorobiia</taxon>
        <taxon>Chlorobiales</taxon>
        <taxon>Chloroherpetonaceae</taxon>
        <taxon>Chloroherpeton</taxon>
    </lineage>
</organism>
<accession>B3QYD5</accession>
<evidence type="ECO:0000255" key="1">
    <source>
        <dbReference type="HAMAP-Rule" id="MF_01326"/>
    </source>
</evidence>
<evidence type="ECO:0000305" key="2"/>
<proteinExistence type="inferred from homology"/>
<comment type="function">
    <text evidence="1">One of two assembly initiator proteins, it binds directly to the 5'-end of the 23S rRNA, where it nucleates assembly of the 50S subunit.</text>
</comment>
<comment type="function">
    <text evidence="1">One of the proteins that surrounds the polypeptide exit tunnel on the outside of the subunit.</text>
</comment>
<comment type="subunit">
    <text evidence="1">Part of the 50S ribosomal subunit.</text>
</comment>
<comment type="similarity">
    <text evidence="1">Belongs to the universal ribosomal protein uL24 family.</text>
</comment>
<name>RL24_CHLT3</name>
<protein>
    <recommendedName>
        <fullName evidence="1">Large ribosomal subunit protein uL24</fullName>
    </recommendedName>
    <alternativeName>
        <fullName evidence="2">50S ribosomal protein L24</fullName>
    </alternativeName>
</protein>
<dbReference type="EMBL" id="CP001100">
    <property type="protein sequence ID" value="ACF13563.1"/>
    <property type="molecule type" value="Genomic_DNA"/>
</dbReference>
<dbReference type="RefSeq" id="WP_012499647.1">
    <property type="nucleotide sequence ID" value="NC_011026.1"/>
</dbReference>
<dbReference type="SMR" id="B3QYD5"/>
<dbReference type="STRING" id="517418.Ctha_1099"/>
<dbReference type="KEGG" id="cts:Ctha_1099"/>
<dbReference type="eggNOG" id="COG0198">
    <property type="taxonomic scope" value="Bacteria"/>
</dbReference>
<dbReference type="HOGENOM" id="CLU_093315_3_0_10"/>
<dbReference type="OrthoDB" id="9807419at2"/>
<dbReference type="Proteomes" id="UP000001208">
    <property type="component" value="Chromosome"/>
</dbReference>
<dbReference type="GO" id="GO:1990904">
    <property type="term" value="C:ribonucleoprotein complex"/>
    <property type="evidence" value="ECO:0007669"/>
    <property type="project" value="UniProtKB-KW"/>
</dbReference>
<dbReference type="GO" id="GO:0005840">
    <property type="term" value="C:ribosome"/>
    <property type="evidence" value="ECO:0007669"/>
    <property type="project" value="UniProtKB-KW"/>
</dbReference>
<dbReference type="GO" id="GO:0019843">
    <property type="term" value="F:rRNA binding"/>
    <property type="evidence" value="ECO:0007669"/>
    <property type="project" value="UniProtKB-UniRule"/>
</dbReference>
<dbReference type="GO" id="GO:0003735">
    <property type="term" value="F:structural constituent of ribosome"/>
    <property type="evidence" value="ECO:0007669"/>
    <property type="project" value="InterPro"/>
</dbReference>
<dbReference type="GO" id="GO:0006412">
    <property type="term" value="P:translation"/>
    <property type="evidence" value="ECO:0007669"/>
    <property type="project" value="UniProtKB-UniRule"/>
</dbReference>
<dbReference type="CDD" id="cd06089">
    <property type="entry name" value="KOW_RPL26"/>
    <property type="match status" value="1"/>
</dbReference>
<dbReference type="Gene3D" id="2.30.30.30">
    <property type="match status" value="1"/>
</dbReference>
<dbReference type="HAMAP" id="MF_01326_B">
    <property type="entry name" value="Ribosomal_uL24_B"/>
    <property type="match status" value="1"/>
</dbReference>
<dbReference type="InterPro" id="IPR005824">
    <property type="entry name" value="KOW"/>
</dbReference>
<dbReference type="InterPro" id="IPR014722">
    <property type="entry name" value="Rib_uL2_dom2"/>
</dbReference>
<dbReference type="InterPro" id="IPR003256">
    <property type="entry name" value="Ribosomal_uL24"/>
</dbReference>
<dbReference type="InterPro" id="IPR005825">
    <property type="entry name" value="Ribosomal_uL24_CS"/>
</dbReference>
<dbReference type="InterPro" id="IPR041988">
    <property type="entry name" value="Ribosomal_uL24_KOW"/>
</dbReference>
<dbReference type="InterPro" id="IPR008991">
    <property type="entry name" value="Translation_prot_SH3-like_sf"/>
</dbReference>
<dbReference type="NCBIfam" id="TIGR01079">
    <property type="entry name" value="rplX_bact"/>
    <property type="match status" value="1"/>
</dbReference>
<dbReference type="PANTHER" id="PTHR12903">
    <property type="entry name" value="MITOCHONDRIAL RIBOSOMAL PROTEIN L24"/>
    <property type="match status" value="1"/>
</dbReference>
<dbReference type="Pfam" id="PF00467">
    <property type="entry name" value="KOW"/>
    <property type="match status" value="1"/>
</dbReference>
<dbReference type="Pfam" id="PF17136">
    <property type="entry name" value="ribosomal_L24"/>
    <property type="match status" value="1"/>
</dbReference>
<dbReference type="SMART" id="SM00739">
    <property type="entry name" value="KOW"/>
    <property type="match status" value="1"/>
</dbReference>
<dbReference type="SUPFAM" id="SSF50104">
    <property type="entry name" value="Translation proteins SH3-like domain"/>
    <property type="match status" value="1"/>
</dbReference>
<dbReference type="PROSITE" id="PS01108">
    <property type="entry name" value="RIBOSOMAL_L24"/>
    <property type="match status" value="1"/>
</dbReference>
<feature type="chain" id="PRO_0000355655" description="Large ribosomal subunit protein uL24">
    <location>
        <begin position="1"/>
        <end position="81"/>
    </location>
</feature>
<keyword id="KW-1185">Reference proteome</keyword>
<keyword id="KW-0687">Ribonucleoprotein</keyword>
<keyword id="KW-0689">Ribosomal protein</keyword>
<keyword id="KW-0694">RNA-binding</keyword>
<keyword id="KW-0699">rRNA-binding</keyword>
<reference key="1">
    <citation type="submission" date="2008-06" db="EMBL/GenBank/DDBJ databases">
        <title>Complete sequence of Chloroherpeton thalassium ATCC 35110.</title>
        <authorList>
            <consortium name="US DOE Joint Genome Institute"/>
            <person name="Lucas S."/>
            <person name="Copeland A."/>
            <person name="Lapidus A."/>
            <person name="Glavina del Rio T."/>
            <person name="Dalin E."/>
            <person name="Tice H."/>
            <person name="Bruce D."/>
            <person name="Goodwin L."/>
            <person name="Pitluck S."/>
            <person name="Schmutz J."/>
            <person name="Larimer F."/>
            <person name="Land M."/>
            <person name="Hauser L."/>
            <person name="Kyrpides N."/>
            <person name="Mikhailova N."/>
            <person name="Liu Z."/>
            <person name="Li T."/>
            <person name="Zhao F."/>
            <person name="Overmann J."/>
            <person name="Bryant D.A."/>
            <person name="Richardson P."/>
        </authorList>
    </citation>
    <scope>NUCLEOTIDE SEQUENCE [LARGE SCALE GENOMIC DNA]</scope>
    <source>
        <strain>ATCC 35110 / GB-78</strain>
    </source>
</reference>